<proteinExistence type="inferred from homology"/>
<evidence type="ECO:0000255" key="1">
    <source>
        <dbReference type="HAMAP-Rule" id="MF_01588"/>
    </source>
</evidence>
<organism>
    <name type="scientific">Lactobacillus gasseri (strain ATCC 33323 / DSM 20243 / BCRC 14619 / CIP 102991 / JCM 1131 / KCTC 3163 / NCIMB 11718 / NCTC 13722 / AM63)</name>
    <dbReference type="NCBI Taxonomy" id="324831"/>
    <lineage>
        <taxon>Bacteria</taxon>
        <taxon>Bacillati</taxon>
        <taxon>Bacillota</taxon>
        <taxon>Bacilli</taxon>
        <taxon>Lactobacillales</taxon>
        <taxon>Lactobacillaceae</taxon>
        <taxon>Lactobacillus</taxon>
    </lineage>
</organism>
<dbReference type="EC" id="6.5.1.2" evidence="1"/>
<dbReference type="EMBL" id="CP000413">
    <property type="protein sequence ID" value="ABJ60870.1"/>
    <property type="molecule type" value="Genomic_DNA"/>
</dbReference>
<dbReference type="RefSeq" id="WP_011678960.1">
    <property type="nucleotide sequence ID" value="NZ_WBMG01000003.1"/>
</dbReference>
<dbReference type="SMR" id="Q041K2"/>
<dbReference type="GeneID" id="29639251"/>
<dbReference type="KEGG" id="lga:LGAS_1515"/>
<dbReference type="HOGENOM" id="CLU_007764_2_1_9"/>
<dbReference type="BioCyc" id="LGAS324831:G1G6Y-1512-MONOMER"/>
<dbReference type="Proteomes" id="UP000000664">
    <property type="component" value="Chromosome"/>
</dbReference>
<dbReference type="GO" id="GO:0005829">
    <property type="term" value="C:cytosol"/>
    <property type="evidence" value="ECO:0007669"/>
    <property type="project" value="TreeGrafter"/>
</dbReference>
<dbReference type="GO" id="GO:0003911">
    <property type="term" value="F:DNA ligase (NAD+) activity"/>
    <property type="evidence" value="ECO:0007669"/>
    <property type="project" value="UniProtKB-UniRule"/>
</dbReference>
<dbReference type="GO" id="GO:0046872">
    <property type="term" value="F:metal ion binding"/>
    <property type="evidence" value="ECO:0007669"/>
    <property type="project" value="UniProtKB-KW"/>
</dbReference>
<dbReference type="GO" id="GO:0006281">
    <property type="term" value="P:DNA repair"/>
    <property type="evidence" value="ECO:0007669"/>
    <property type="project" value="UniProtKB-KW"/>
</dbReference>
<dbReference type="GO" id="GO:0006260">
    <property type="term" value="P:DNA replication"/>
    <property type="evidence" value="ECO:0007669"/>
    <property type="project" value="UniProtKB-KW"/>
</dbReference>
<dbReference type="CDD" id="cd17748">
    <property type="entry name" value="BRCT_DNA_ligase_like"/>
    <property type="match status" value="1"/>
</dbReference>
<dbReference type="CDD" id="cd00114">
    <property type="entry name" value="LIGANc"/>
    <property type="match status" value="1"/>
</dbReference>
<dbReference type="FunFam" id="1.10.150.20:FF:000007">
    <property type="entry name" value="DNA ligase"/>
    <property type="match status" value="1"/>
</dbReference>
<dbReference type="FunFam" id="2.40.50.140:FF:000012">
    <property type="entry name" value="DNA ligase"/>
    <property type="match status" value="1"/>
</dbReference>
<dbReference type="FunFam" id="3.30.470.30:FF:000001">
    <property type="entry name" value="DNA ligase"/>
    <property type="match status" value="1"/>
</dbReference>
<dbReference type="Gene3D" id="6.20.10.30">
    <property type="match status" value="1"/>
</dbReference>
<dbReference type="Gene3D" id="1.10.150.20">
    <property type="entry name" value="5' to 3' exonuclease, C-terminal subdomain"/>
    <property type="match status" value="2"/>
</dbReference>
<dbReference type="Gene3D" id="3.40.50.10190">
    <property type="entry name" value="BRCT domain"/>
    <property type="match status" value="1"/>
</dbReference>
<dbReference type="Gene3D" id="3.30.470.30">
    <property type="entry name" value="DNA ligase/mRNA capping enzyme"/>
    <property type="match status" value="1"/>
</dbReference>
<dbReference type="Gene3D" id="1.10.287.610">
    <property type="entry name" value="Helix hairpin bin"/>
    <property type="match status" value="1"/>
</dbReference>
<dbReference type="Gene3D" id="2.40.50.140">
    <property type="entry name" value="Nucleic acid-binding proteins"/>
    <property type="match status" value="1"/>
</dbReference>
<dbReference type="HAMAP" id="MF_01588">
    <property type="entry name" value="DNA_ligase_A"/>
    <property type="match status" value="1"/>
</dbReference>
<dbReference type="InterPro" id="IPR001357">
    <property type="entry name" value="BRCT_dom"/>
</dbReference>
<dbReference type="InterPro" id="IPR036420">
    <property type="entry name" value="BRCT_dom_sf"/>
</dbReference>
<dbReference type="InterPro" id="IPR041663">
    <property type="entry name" value="DisA/LigA_HHH"/>
</dbReference>
<dbReference type="InterPro" id="IPR001679">
    <property type="entry name" value="DNA_ligase"/>
</dbReference>
<dbReference type="InterPro" id="IPR018239">
    <property type="entry name" value="DNA_ligase_AS"/>
</dbReference>
<dbReference type="InterPro" id="IPR033136">
    <property type="entry name" value="DNA_ligase_CS"/>
</dbReference>
<dbReference type="InterPro" id="IPR013839">
    <property type="entry name" value="DNAligase_adenylation"/>
</dbReference>
<dbReference type="InterPro" id="IPR013840">
    <property type="entry name" value="DNAligase_N"/>
</dbReference>
<dbReference type="InterPro" id="IPR012340">
    <property type="entry name" value="NA-bd_OB-fold"/>
</dbReference>
<dbReference type="InterPro" id="IPR004150">
    <property type="entry name" value="NAD_DNA_ligase_OB"/>
</dbReference>
<dbReference type="InterPro" id="IPR010994">
    <property type="entry name" value="RuvA_2-like"/>
</dbReference>
<dbReference type="InterPro" id="IPR004149">
    <property type="entry name" value="Znf_DNAligase_C4"/>
</dbReference>
<dbReference type="NCBIfam" id="TIGR00575">
    <property type="entry name" value="dnlj"/>
    <property type="match status" value="1"/>
</dbReference>
<dbReference type="NCBIfam" id="NF005932">
    <property type="entry name" value="PRK07956.1"/>
    <property type="match status" value="1"/>
</dbReference>
<dbReference type="PANTHER" id="PTHR23389">
    <property type="entry name" value="CHROMOSOME TRANSMISSION FIDELITY FACTOR 18"/>
    <property type="match status" value="1"/>
</dbReference>
<dbReference type="PANTHER" id="PTHR23389:SF9">
    <property type="entry name" value="DNA LIGASE"/>
    <property type="match status" value="1"/>
</dbReference>
<dbReference type="Pfam" id="PF00533">
    <property type="entry name" value="BRCT"/>
    <property type="match status" value="1"/>
</dbReference>
<dbReference type="Pfam" id="PF01653">
    <property type="entry name" value="DNA_ligase_aden"/>
    <property type="match status" value="1"/>
</dbReference>
<dbReference type="Pfam" id="PF03120">
    <property type="entry name" value="DNA_ligase_OB"/>
    <property type="match status" value="1"/>
</dbReference>
<dbReference type="Pfam" id="PF03119">
    <property type="entry name" value="DNA_ligase_ZBD"/>
    <property type="match status" value="1"/>
</dbReference>
<dbReference type="Pfam" id="PF12826">
    <property type="entry name" value="HHH_2"/>
    <property type="match status" value="1"/>
</dbReference>
<dbReference type="PIRSF" id="PIRSF001604">
    <property type="entry name" value="LigA"/>
    <property type="match status" value="1"/>
</dbReference>
<dbReference type="SMART" id="SM00292">
    <property type="entry name" value="BRCT"/>
    <property type="match status" value="1"/>
</dbReference>
<dbReference type="SMART" id="SM00532">
    <property type="entry name" value="LIGANc"/>
    <property type="match status" value="1"/>
</dbReference>
<dbReference type="SUPFAM" id="SSF52113">
    <property type="entry name" value="BRCT domain"/>
    <property type="match status" value="1"/>
</dbReference>
<dbReference type="SUPFAM" id="SSF56091">
    <property type="entry name" value="DNA ligase/mRNA capping enzyme, catalytic domain"/>
    <property type="match status" value="1"/>
</dbReference>
<dbReference type="SUPFAM" id="SSF50249">
    <property type="entry name" value="Nucleic acid-binding proteins"/>
    <property type="match status" value="1"/>
</dbReference>
<dbReference type="SUPFAM" id="SSF47781">
    <property type="entry name" value="RuvA domain 2-like"/>
    <property type="match status" value="1"/>
</dbReference>
<dbReference type="PROSITE" id="PS50172">
    <property type="entry name" value="BRCT"/>
    <property type="match status" value="1"/>
</dbReference>
<dbReference type="PROSITE" id="PS01055">
    <property type="entry name" value="DNA_LIGASE_N1"/>
    <property type="match status" value="1"/>
</dbReference>
<dbReference type="PROSITE" id="PS01056">
    <property type="entry name" value="DNA_LIGASE_N2"/>
    <property type="match status" value="1"/>
</dbReference>
<gene>
    <name evidence="1" type="primary">ligA</name>
    <name type="ordered locus">LGAS_1515</name>
</gene>
<feature type="chain" id="PRO_0000313276" description="DNA ligase">
    <location>
        <begin position="1"/>
        <end position="668"/>
    </location>
</feature>
<feature type="domain" description="BRCT" evidence="1">
    <location>
        <begin position="590"/>
        <end position="668"/>
    </location>
</feature>
<feature type="active site" description="N6-AMP-lysine intermediate" evidence="1">
    <location>
        <position position="118"/>
    </location>
</feature>
<feature type="binding site" evidence="1">
    <location>
        <begin position="37"/>
        <end position="41"/>
    </location>
    <ligand>
        <name>NAD(+)</name>
        <dbReference type="ChEBI" id="CHEBI:57540"/>
    </ligand>
</feature>
<feature type="binding site" evidence="1">
    <location>
        <begin position="86"/>
        <end position="87"/>
    </location>
    <ligand>
        <name>NAD(+)</name>
        <dbReference type="ChEBI" id="CHEBI:57540"/>
    </ligand>
</feature>
<feature type="binding site" evidence="1">
    <location>
        <position position="116"/>
    </location>
    <ligand>
        <name>NAD(+)</name>
        <dbReference type="ChEBI" id="CHEBI:57540"/>
    </ligand>
</feature>
<feature type="binding site" evidence="1">
    <location>
        <position position="139"/>
    </location>
    <ligand>
        <name>NAD(+)</name>
        <dbReference type="ChEBI" id="CHEBI:57540"/>
    </ligand>
</feature>
<feature type="binding site" evidence="1">
    <location>
        <position position="173"/>
    </location>
    <ligand>
        <name>NAD(+)</name>
        <dbReference type="ChEBI" id="CHEBI:57540"/>
    </ligand>
</feature>
<feature type="binding site" evidence="1">
    <location>
        <position position="288"/>
    </location>
    <ligand>
        <name>NAD(+)</name>
        <dbReference type="ChEBI" id="CHEBI:57540"/>
    </ligand>
</feature>
<feature type="binding site" evidence="1">
    <location>
        <position position="312"/>
    </location>
    <ligand>
        <name>NAD(+)</name>
        <dbReference type="ChEBI" id="CHEBI:57540"/>
    </ligand>
</feature>
<feature type="binding site" evidence="1">
    <location>
        <position position="406"/>
    </location>
    <ligand>
        <name>Zn(2+)</name>
        <dbReference type="ChEBI" id="CHEBI:29105"/>
    </ligand>
</feature>
<feature type="binding site" evidence="1">
    <location>
        <position position="409"/>
    </location>
    <ligand>
        <name>Zn(2+)</name>
        <dbReference type="ChEBI" id="CHEBI:29105"/>
    </ligand>
</feature>
<feature type="binding site" evidence="1">
    <location>
        <position position="424"/>
    </location>
    <ligand>
        <name>Zn(2+)</name>
        <dbReference type="ChEBI" id="CHEBI:29105"/>
    </ligand>
</feature>
<feature type="binding site" evidence="1">
    <location>
        <position position="429"/>
    </location>
    <ligand>
        <name>Zn(2+)</name>
        <dbReference type="ChEBI" id="CHEBI:29105"/>
    </ligand>
</feature>
<accession>Q041K2</accession>
<keyword id="KW-0227">DNA damage</keyword>
<keyword id="KW-0234">DNA repair</keyword>
<keyword id="KW-0235">DNA replication</keyword>
<keyword id="KW-0436">Ligase</keyword>
<keyword id="KW-0460">Magnesium</keyword>
<keyword id="KW-0464">Manganese</keyword>
<keyword id="KW-0479">Metal-binding</keyword>
<keyword id="KW-0520">NAD</keyword>
<keyword id="KW-0862">Zinc</keyword>
<reference key="1">
    <citation type="journal article" date="2006" name="Proc. Natl. Acad. Sci. U.S.A.">
        <title>Comparative genomics of the lactic acid bacteria.</title>
        <authorList>
            <person name="Makarova K.S."/>
            <person name="Slesarev A."/>
            <person name="Wolf Y.I."/>
            <person name="Sorokin A."/>
            <person name="Mirkin B."/>
            <person name="Koonin E.V."/>
            <person name="Pavlov A."/>
            <person name="Pavlova N."/>
            <person name="Karamychev V."/>
            <person name="Polouchine N."/>
            <person name="Shakhova V."/>
            <person name="Grigoriev I."/>
            <person name="Lou Y."/>
            <person name="Rohksar D."/>
            <person name="Lucas S."/>
            <person name="Huang K."/>
            <person name="Goodstein D.M."/>
            <person name="Hawkins T."/>
            <person name="Plengvidhya V."/>
            <person name="Welker D."/>
            <person name="Hughes J."/>
            <person name="Goh Y."/>
            <person name="Benson A."/>
            <person name="Baldwin K."/>
            <person name="Lee J.-H."/>
            <person name="Diaz-Muniz I."/>
            <person name="Dosti B."/>
            <person name="Smeianov V."/>
            <person name="Wechter W."/>
            <person name="Barabote R."/>
            <person name="Lorca G."/>
            <person name="Altermann E."/>
            <person name="Barrangou R."/>
            <person name="Ganesan B."/>
            <person name="Xie Y."/>
            <person name="Rawsthorne H."/>
            <person name="Tamir D."/>
            <person name="Parker C."/>
            <person name="Breidt F."/>
            <person name="Broadbent J.R."/>
            <person name="Hutkins R."/>
            <person name="O'Sullivan D."/>
            <person name="Steele J."/>
            <person name="Unlu G."/>
            <person name="Saier M.H. Jr."/>
            <person name="Klaenhammer T."/>
            <person name="Richardson P."/>
            <person name="Kozyavkin S."/>
            <person name="Weimer B.C."/>
            <person name="Mills D.A."/>
        </authorList>
    </citation>
    <scope>NUCLEOTIDE SEQUENCE [LARGE SCALE GENOMIC DNA]</scope>
    <source>
        <strain>ATCC 33323 / DSM 20243 / BCRC 14619 / CIP 102991 / JCM 1131 / KCTC 3163 / NCIMB 11718 / NCTC 13722 / AM63</strain>
    </source>
</reference>
<protein>
    <recommendedName>
        <fullName evidence="1">DNA ligase</fullName>
        <ecNumber evidence="1">6.5.1.2</ecNumber>
    </recommendedName>
    <alternativeName>
        <fullName evidence="1">Polydeoxyribonucleotide synthase [NAD(+)]</fullName>
    </alternativeName>
</protein>
<sequence length="668" mass="74693">MAVLTHNQASQKVDELRKKLDEWAEDYYAKDAPVVEDAVYDKAYQELVELEKQFPDLVTSDSITQRVGGEIKSDLSKVEHPVPMLSMGDVFSKDELKEFDERITKLVGHPVAYNVELKIDGLSLSLEYTAGKLTRASTRGNGRVGEDVTANAKFIKDIPQTLPEPLTTEVRGECYMEKEAFAKLNAERDEKGEQVFANPRNAAAGSLRQLDARITKKRNLSTFIYTWVNPPKNITSQHQAIDEMNRLGFHTNQTGQRLESMDEVFKFIDEYTAKRNDLSYGIDGIVLKVDDLSLQNELGNTVKVPRWEIAYKFPPEEQETVVKEIEWTVGRTGVVTPTAVMDPVQLAGTVVSRASLHNPDYLREKGVRIGDTVKLHKAGDIIPEISSVVLNKRPKDSEPYQIPNKCPSCGQDLVHLQDEVALRCINPMCPAQVEEGIIHFASRGAMNIMGLGPRIVKQLIDKNFVNDVADLYHLTNEQLSQLDHFKDKSITNLLTSIENSKQNSAELLLFGLGIDHVGAKAARLILEKYKNLEKVSQLTVPELTSIDTIGETIAESLTAYFNQPSAQKLLQELRDSGLNMEYLGTVEEEAPDNFFKEKTVVLTGKLSDFTRSEFTKKLQDLGAKVTGSVSKKTDYLIYGADAGSKKDKAEKLQVPMLTEQEAIAKIEK</sequence>
<comment type="function">
    <text evidence="1">DNA ligase that catalyzes the formation of phosphodiester linkages between 5'-phosphoryl and 3'-hydroxyl groups in double-stranded DNA using NAD as a coenzyme and as the energy source for the reaction. It is essential for DNA replication and repair of damaged DNA.</text>
</comment>
<comment type="catalytic activity">
    <reaction evidence="1">
        <text>NAD(+) + (deoxyribonucleotide)n-3'-hydroxyl + 5'-phospho-(deoxyribonucleotide)m = (deoxyribonucleotide)n+m + AMP + beta-nicotinamide D-nucleotide.</text>
        <dbReference type="EC" id="6.5.1.2"/>
    </reaction>
</comment>
<comment type="cofactor">
    <cofactor evidence="1">
        <name>Mg(2+)</name>
        <dbReference type="ChEBI" id="CHEBI:18420"/>
    </cofactor>
    <cofactor evidence="1">
        <name>Mn(2+)</name>
        <dbReference type="ChEBI" id="CHEBI:29035"/>
    </cofactor>
</comment>
<comment type="similarity">
    <text evidence="1">Belongs to the NAD-dependent DNA ligase family. LigA subfamily.</text>
</comment>
<name>DNLJ_LACGA</name>